<gene>
    <name type="ordered locus">BCA_0027</name>
</gene>
<proteinExistence type="inferred from homology"/>
<organism>
    <name type="scientific">Bacillus cereus (strain 03BB102)</name>
    <dbReference type="NCBI Taxonomy" id="572264"/>
    <lineage>
        <taxon>Bacteria</taxon>
        <taxon>Bacillati</taxon>
        <taxon>Bacillota</taxon>
        <taxon>Bacilli</taxon>
        <taxon>Bacillales</taxon>
        <taxon>Bacillaceae</taxon>
        <taxon>Bacillus</taxon>
        <taxon>Bacillus cereus group</taxon>
    </lineage>
</organism>
<protein>
    <recommendedName>
        <fullName evidence="1">Nucleoid-associated protein BCA_0027</fullName>
    </recommendedName>
</protein>
<reference key="1">
    <citation type="submission" date="2009-02" db="EMBL/GenBank/DDBJ databases">
        <title>Genome sequence of Bacillus cereus 03BB102.</title>
        <authorList>
            <person name="Dodson R.J."/>
            <person name="Jackson P."/>
            <person name="Munk A.C."/>
            <person name="Brettin T."/>
            <person name="Bruce D."/>
            <person name="Detter C."/>
            <person name="Tapia R."/>
            <person name="Han C."/>
            <person name="Sutton G."/>
            <person name="Sims D."/>
        </authorList>
    </citation>
    <scope>NUCLEOTIDE SEQUENCE [LARGE SCALE GENOMIC DNA]</scope>
    <source>
        <strain>03BB102</strain>
    </source>
</reference>
<feature type="chain" id="PRO_1000197641" description="Nucleoid-associated protein BCA_0027">
    <location>
        <begin position="1"/>
        <end position="109"/>
    </location>
</feature>
<comment type="function">
    <text evidence="1">Binds to DNA and alters its conformation. May be involved in regulation of gene expression, nucleoid organization and DNA protection.</text>
</comment>
<comment type="subunit">
    <text evidence="1">Homodimer.</text>
</comment>
<comment type="subcellular location">
    <subcellularLocation>
        <location evidence="1">Cytoplasm</location>
        <location evidence="1">Nucleoid</location>
    </subcellularLocation>
</comment>
<comment type="similarity">
    <text evidence="1">Belongs to the YbaB/EbfC family.</text>
</comment>
<accession>C1ES26</accession>
<keyword id="KW-0963">Cytoplasm</keyword>
<keyword id="KW-0238">DNA-binding</keyword>
<evidence type="ECO:0000255" key="1">
    <source>
        <dbReference type="HAMAP-Rule" id="MF_00274"/>
    </source>
</evidence>
<sequence>MMRGGMGNMNNMMKQMQKMQKEMAKAQEELGEKTVEGTAGGGMITVIANGHKQILEVKVKEEVVDPEDIEMLQDLVLAATNDALKKADELSNSTMGKFTKGLNLPGGMF</sequence>
<name>Y027_BACC3</name>
<dbReference type="EMBL" id="CP001407">
    <property type="protein sequence ID" value="ACO29803.1"/>
    <property type="molecule type" value="Genomic_DNA"/>
</dbReference>
<dbReference type="SMR" id="C1ES26"/>
<dbReference type="KEGG" id="bcx:BCA_0027"/>
<dbReference type="PATRIC" id="fig|572264.18.peg.85"/>
<dbReference type="Proteomes" id="UP000002210">
    <property type="component" value="Chromosome"/>
</dbReference>
<dbReference type="GO" id="GO:0043590">
    <property type="term" value="C:bacterial nucleoid"/>
    <property type="evidence" value="ECO:0007669"/>
    <property type="project" value="UniProtKB-UniRule"/>
</dbReference>
<dbReference type="GO" id="GO:0005829">
    <property type="term" value="C:cytosol"/>
    <property type="evidence" value="ECO:0007669"/>
    <property type="project" value="TreeGrafter"/>
</dbReference>
<dbReference type="GO" id="GO:0003677">
    <property type="term" value="F:DNA binding"/>
    <property type="evidence" value="ECO:0007669"/>
    <property type="project" value="UniProtKB-UniRule"/>
</dbReference>
<dbReference type="FunFam" id="3.30.1310.10:FF:000002">
    <property type="entry name" value="Nucleoid-associated protein IKC_06587"/>
    <property type="match status" value="1"/>
</dbReference>
<dbReference type="Gene3D" id="3.30.1310.10">
    <property type="entry name" value="Nucleoid-associated protein YbaB-like domain"/>
    <property type="match status" value="1"/>
</dbReference>
<dbReference type="HAMAP" id="MF_00274">
    <property type="entry name" value="DNA_YbaB_EbfC"/>
    <property type="match status" value="1"/>
</dbReference>
<dbReference type="InterPro" id="IPR036894">
    <property type="entry name" value="YbaB-like_sf"/>
</dbReference>
<dbReference type="InterPro" id="IPR004401">
    <property type="entry name" value="YbaB/EbfC"/>
</dbReference>
<dbReference type="NCBIfam" id="TIGR00103">
    <property type="entry name" value="DNA_YbaB_EbfC"/>
    <property type="match status" value="1"/>
</dbReference>
<dbReference type="PANTHER" id="PTHR33449">
    <property type="entry name" value="NUCLEOID-ASSOCIATED PROTEIN YBAB"/>
    <property type="match status" value="1"/>
</dbReference>
<dbReference type="PANTHER" id="PTHR33449:SF1">
    <property type="entry name" value="NUCLEOID-ASSOCIATED PROTEIN YBAB"/>
    <property type="match status" value="1"/>
</dbReference>
<dbReference type="Pfam" id="PF02575">
    <property type="entry name" value="YbaB_DNA_bd"/>
    <property type="match status" value="1"/>
</dbReference>
<dbReference type="PIRSF" id="PIRSF004555">
    <property type="entry name" value="UCP004555"/>
    <property type="match status" value="1"/>
</dbReference>
<dbReference type="SUPFAM" id="SSF82607">
    <property type="entry name" value="YbaB-like"/>
    <property type="match status" value="1"/>
</dbReference>